<name>SYL_CORGL</name>
<sequence length="952" mass="106779">MTNPSEGTTPLAFRYTPELANKIEGEWQNYWTDNGTFNAPNPVGDLAPADGKALPEDKLFVQDMFPYPSGAGLHVGHPLGYIATDVFARYNRMLGKNVLHTLGYDAFGLPAEQYAIQTGTHPRTTTMANIENMKRQLGALGLGHDSRRAVATTDPEFYKWTQWIFLQIFNSWFDAEQQKARPISELIPLLESGELKTKDGADYNALGDVEKQKAVDDYRLVYRSNSTVNWCPGLGTVLANEEVTADGRSERGNFPVFRKNLSQWMMRITAYSDRLIDDLELLDWTEKVKSMQRNWIGRSRGAEVDFSAEGETVTVFTTRPDTLFGATYMVLAPEHELVDVLLEKAGSYEGVDARWTNGQASPAEAVAAYRASIAAKSDLERQENKEKTGVFLGVYATNPVNGDQITVFIADYVLTGYGTGAIMAVPAHDERDYEFATVLGLPIKEVVAGGNIEEAAFTESGEAVNSANDNGLDINGLAKDEAIAKTIEWLEEKELGRGTIQYKLRDWLFARQRYWGEPFPIVYDENGQAHALPDSMLPVELPEVEDYKPVSFDPEDADSEPSPPLAKAREWVEVELDLGDGKKKYTRDTNVMPQWAGSSWYQLRYVDPSNDEQFCNIENERYWTGPRPETHGPNDPGGVDLYVGGVEHAVLHLLYARFWHKVLFDLGHVSSKEPYRRLYNQGYIQAFAYTDSRGVYVPADDVEEKDGKFFYQGEEVNQEYGKMGKSLKNAVAPDDICNNFGADTLRVYEMAMGPLDTSRPWATKDVVGAQRFLQRLWRLVVDENTGEVLTRDEVLTDDDNKQLHRTIAGVRDDYTNLRVNTVVAKLIEYVNYLTKTYPDTIPAGAVLPLIVMVSPIAPHIAEELWKKLGHDDTVTYEPFPTFEEKWLTDDEIELPVQVNGKVRGRITVAADASQEQVIEAALADEKVQEQISGKNLIKQIVVPGRMVNLVVK</sequence>
<keyword id="KW-0030">Aminoacyl-tRNA synthetase</keyword>
<keyword id="KW-0067">ATP-binding</keyword>
<keyword id="KW-0963">Cytoplasm</keyword>
<keyword id="KW-0436">Ligase</keyword>
<keyword id="KW-0547">Nucleotide-binding</keyword>
<keyword id="KW-0648">Protein biosynthesis</keyword>
<keyword id="KW-1185">Reference proteome</keyword>
<dbReference type="EC" id="6.1.1.4" evidence="1"/>
<dbReference type="EMBL" id="BA000036">
    <property type="protein sequence ID" value="BAC00412.1"/>
    <property type="molecule type" value="Genomic_DNA"/>
</dbReference>
<dbReference type="EMBL" id="BX927157">
    <property type="protein sequence ID" value="CAF18958.1"/>
    <property type="status" value="ALT_INIT"/>
    <property type="molecule type" value="Genomic_DNA"/>
</dbReference>
<dbReference type="RefSeq" id="NP_602213.1">
    <property type="nucleotide sequence ID" value="NC_003450.3"/>
</dbReference>
<dbReference type="RefSeq" id="WP_011015573.1">
    <property type="nucleotide sequence ID" value="NC_006958.1"/>
</dbReference>
<dbReference type="SMR" id="Q8NLC4"/>
<dbReference type="STRING" id="196627.cg3346"/>
<dbReference type="GeneID" id="1020959"/>
<dbReference type="KEGG" id="cgb:cg3346"/>
<dbReference type="KEGG" id="cgl:Cgl3018"/>
<dbReference type="PATRIC" id="fig|196627.13.peg.2953"/>
<dbReference type="eggNOG" id="COG0495">
    <property type="taxonomic scope" value="Bacteria"/>
</dbReference>
<dbReference type="HOGENOM" id="CLU_004427_0_0_11"/>
<dbReference type="OrthoDB" id="9810365at2"/>
<dbReference type="BioCyc" id="CORYNE:G18NG-12639-MONOMER"/>
<dbReference type="Proteomes" id="UP000000582">
    <property type="component" value="Chromosome"/>
</dbReference>
<dbReference type="Proteomes" id="UP000001009">
    <property type="component" value="Chromosome"/>
</dbReference>
<dbReference type="GO" id="GO:0005829">
    <property type="term" value="C:cytosol"/>
    <property type="evidence" value="ECO:0007669"/>
    <property type="project" value="TreeGrafter"/>
</dbReference>
<dbReference type="GO" id="GO:0002161">
    <property type="term" value="F:aminoacyl-tRNA deacylase activity"/>
    <property type="evidence" value="ECO:0007669"/>
    <property type="project" value="InterPro"/>
</dbReference>
<dbReference type="GO" id="GO:0005524">
    <property type="term" value="F:ATP binding"/>
    <property type="evidence" value="ECO:0007669"/>
    <property type="project" value="UniProtKB-UniRule"/>
</dbReference>
<dbReference type="GO" id="GO:0004823">
    <property type="term" value="F:leucine-tRNA ligase activity"/>
    <property type="evidence" value="ECO:0007669"/>
    <property type="project" value="UniProtKB-UniRule"/>
</dbReference>
<dbReference type="GO" id="GO:0006429">
    <property type="term" value="P:leucyl-tRNA aminoacylation"/>
    <property type="evidence" value="ECO:0007669"/>
    <property type="project" value="UniProtKB-UniRule"/>
</dbReference>
<dbReference type="CDD" id="cd07958">
    <property type="entry name" value="Anticodon_Ia_Leu_BEm"/>
    <property type="match status" value="1"/>
</dbReference>
<dbReference type="FunFam" id="3.40.50.620:FF:000056">
    <property type="entry name" value="Leucine--tRNA ligase"/>
    <property type="match status" value="1"/>
</dbReference>
<dbReference type="FunFam" id="3.40.50.620:FF:000060">
    <property type="entry name" value="Leucine--tRNA ligase"/>
    <property type="match status" value="1"/>
</dbReference>
<dbReference type="FunFam" id="3.40.50.620:FF:000087">
    <property type="entry name" value="Leucine--tRNA ligase"/>
    <property type="match status" value="1"/>
</dbReference>
<dbReference type="FunFam" id="1.10.730.10:FF:000011">
    <property type="entry name" value="Leucine--tRNA ligase chloroplastic/mitochondrial"/>
    <property type="match status" value="1"/>
</dbReference>
<dbReference type="Gene3D" id="3.40.50.620">
    <property type="entry name" value="HUPs"/>
    <property type="match status" value="3"/>
</dbReference>
<dbReference type="Gene3D" id="1.10.730.10">
    <property type="entry name" value="Isoleucyl-tRNA Synthetase, Domain 1"/>
    <property type="match status" value="1"/>
</dbReference>
<dbReference type="HAMAP" id="MF_00049_B">
    <property type="entry name" value="Leu_tRNA_synth_B"/>
    <property type="match status" value="1"/>
</dbReference>
<dbReference type="InterPro" id="IPR001412">
    <property type="entry name" value="aa-tRNA-synth_I_CS"/>
</dbReference>
<dbReference type="InterPro" id="IPR002302">
    <property type="entry name" value="Leu-tRNA-ligase"/>
</dbReference>
<dbReference type="InterPro" id="IPR025709">
    <property type="entry name" value="Leu_tRNA-synth_edit"/>
</dbReference>
<dbReference type="InterPro" id="IPR013155">
    <property type="entry name" value="M/V/L/I-tRNA-synth_anticd-bd"/>
</dbReference>
<dbReference type="InterPro" id="IPR015413">
    <property type="entry name" value="Methionyl/Leucyl_tRNA_Synth"/>
</dbReference>
<dbReference type="InterPro" id="IPR014729">
    <property type="entry name" value="Rossmann-like_a/b/a_fold"/>
</dbReference>
<dbReference type="InterPro" id="IPR009080">
    <property type="entry name" value="tRNAsynth_Ia_anticodon-bd"/>
</dbReference>
<dbReference type="InterPro" id="IPR009008">
    <property type="entry name" value="Val/Leu/Ile-tRNA-synth_edit"/>
</dbReference>
<dbReference type="NCBIfam" id="TIGR00396">
    <property type="entry name" value="leuS_bact"/>
    <property type="match status" value="1"/>
</dbReference>
<dbReference type="PANTHER" id="PTHR43740:SF2">
    <property type="entry name" value="LEUCINE--TRNA LIGASE, MITOCHONDRIAL"/>
    <property type="match status" value="1"/>
</dbReference>
<dbReference type="PANTHER" id="PTHR43740">
    <property type="entry name" value="LEUCYL-TRNA SYNTHETASE"/>
    <property type="match status" value="1"/>
</dbReference>
<dbReference type="Pfam" id="PF08264">
    <property type="entry name" value="Anticodon_1"/>
    <property type="match status" value="1"/>
</dbReference>
<dbReference type="Pfam" id="PF13603">
    <property type="entry name" value="tRNA-synt_1_2"/>
    <property type="match status" value="1"/>
</dbReference>
<dbReference type="Pfam" id="PF09334">
    <property type="entry name" value="tRNA-synt_1g"/>
    <property type="match status" value="1"/>
</dbReference>
<dbReference type="PRINTS" id="PR00985">
    <property type="entry name" value="TRNASYNTHLEU"/>
</dbReference>
<dbReference type="SUPFAM" id="SSF47323">
    <property type="entry name" value="Anticodon-binding domain of a subclass of class I aminoacyl-tRNA synthetases"/>
    <property type="match status" value="1"/>
</dbReference>
<dbReference type="SUPFAM" id="SSF52374">
    <property type="entry name" value="Nucleotidylyl transferase"/>
    <property type="match status" value="1"/>
</dbReference>
<dbReference type="SUPFAM" id="SSF50677">
    <property type="entry name" value="ValRS/IleRS/LeuRS editing domain"/>
    <property type="match status" value="1"/>
</dbReference>
<dbReference type="PROSITE" id="PS00178">
    <property type="entry name" value="AA_TRNA_LIGASE_I"/>
    <property type="match status" value="1"/>
</dbReference>
<comment type="catalytic activity">
    <reaction evidence="1">
        <text>tRNA(Leu) + L-leucine + ATP = L-leucyl-tRNA(Leu) + AMP + diphosphate</text>
        <dbReference type="Rhea" id="RHEA:11688"/>
        <dbReference type="Rhea" id="RHEA-COMP:9613"/>
        <dbReference type="Rhea" id="RHEA-COMP:9622"/>
        <dbReference type="ChEBI" id="CHEBI:30616"/>
        <dbReference type="ChEBI" id="CHEBI:33019"/>
        <dbReference type="ChEBI" id="CHEBI:57427"/>
        <dbReference type="ChEBI" id="CHEBI:78442"/>
        <dbReference type="ChEBI" id="CHEBI:78494"/>
        <dbReference type="ChEBI" id="CHEBI:456215"/>
        <dbReference type="EC" id="6.1.1.4"/>
    </reaction>
</comment>
<comment type="subcellular location">
    <subcellularLocation>
        <location evidence="1">Cytoplasm</location>
    </subcellularLocation>
</comment>
<comment type="similarity">
    <text evidence="1">Belongs to the class-I aminoacyl-tRNA synthetase family.</text>
</comment>
<comment type="sequence caution" evidence="2">
    <conflict type="erroneous initiation">
        <sequence resource="EMBL-CDS" id="CAF18958"/>
    </conflict>
</comment>
<organism>
    <name type="scientific">Corynebacterium glutamicum (strain ATCC 13032 / DSM 20300 / JCM 1318 / BCRC 11384 / CCUG 27702 / LMG 3730 / NBRC 12168 / NCIMB 10025 / NRRL B-2784 / 534)</name>
    <dbReference type="NCBI Taxonomy" id="196627"/>
    <lineage>
        <taxon>Bacteria</taxon>
        <taxon>Bacillati</taxon>
        <taxon>Actinomycetota</taxon>
        <taxon>Actinomycetes</taxon>
        <taxon>Mycobacteriales</taxon>
        <taxon>Corynebacteriaceae</taxon>
        <taxon>Corynebacterium</taxon>
    </lineage>
</organism>
<gene>
    <name evidence="1" type="primary">leuS</name>
    <name type="ordered locus">Cgl3018</name>
    <name type="ordered locus">cg3346</name>
</gene>
<protein>
    <recommendedName>
        <fullName evidence="1">Leucine--tRNA ligase</fullName>
        <ecNumber evidence="1">6.1.1.4</ecNumber>
    </recommendedName>
    <alternativeName>
        <fullName evidence="1">Leucyl-tRNA synthetase</fullName>
        <shortName evidence="1">LeuRS</shortName>
    </alternativeName>
</protein>
<reference key="1">
    <citation type="journal article" date="2003" name="Appl. Microbiol. Biotechnol.">
        <title>The Corynebacterium glutamicum genome: features and impacts on biotechnological processes.</title>
        <authorList>
            <person name="Ikeda M."/>
            <person name="Nakagawa S."/>
        </authorList>
    </citation>
    <scope>NUCLEOTIDE SEQUENCE [LARGE SCALE GENOMIC DNA]</scope>
    <source>
        <strain>ATCC 13032 / DSM 20300 / JCM 1318 / BCRC 11384 / CCUG 27702 / LMG 3730 / NBRC 12168 / NCIMB 10025 / NRRL B-2784 / 534</strain>
    </source>
</reference>
<reference key="2">
    <citation type="journal article" date="2003" name="J. Biotechnol.">
        <title>The complete Corynebacterium glutamicum ATCC 13032 genome sequence and its impact on the production of L-aspartate-derived amino acids and vitamins.</title>
        <authorList>
            <person name="Kalinowski J."/>
            <person name="Bathe B."/>
            <person name="Bartels D."/>
            <person name="Bischoff N."/>
            <person name="Bott M."/>
            <person name="Burkovski A."/>
            <person name="Dusch N."/>
            <person name="Eggeling L."/>
            <person name="Eikmanns B.J."/>
            <person name="Gaigalat L."/>
            <person name="Goesmann A."/>
            <person name="Hartmann M."/>
            <person name="Huthmacher K."/>
            <person name="Kraemer R."/>
            <person name="Linke B."/>
            <person name="McHardy A.C."/>
            <person name="Meyer F."/>
            <person name="Moeckel B."/>
            <person name="Pfefferle W."/>
            <person name="Puehler A."/>
            <person name="Rey D.A."/>
            <person name="Rueckert C."/>
            <person name="Rupp O."/>
            <person name="Sahm H."/>
            <person name="Wendisch V.F."/>
            <person name="Wiegraebe I."/>
            <person name="Tauch A."/>
        </authorList>
    </citation>
    <scope>NUCLEOTIDE SEQUENCE [LARGE SCALE GENOMIC DNA]</scope>
    <source>
        <strain>ATCC 13032 / DSM 20300 / JCM 1318 / BCRC 11384 / CCUG 27702 / LMG 3730 / NBRC 12168 / NCIMB 10025 / NRRL B-2784 / 534</strain>
    </source>
</reference>
<proteinExistence type="inferred from homology"/>
<accession>Q8NLC4</accession>
<feature type="chain" id="PRO_0000152007" description="Leucine--tRNA ligase">
    <location>
        <begin position="1"/>
        <end position="952"/>
    </location>
</feature>
<feature type="short sequence motif" description="'HIGH' region">
    <location>
        <begin position="66"/>
        <end position="77"/>
    </location>
</feature>
<feature type="short sequence motif" description="'KMSKS' region">
    <location>
        <begin position="722"/>
        <end position="726"/>
    </location>
</feature>
<feature type="binding site" evidence="1">
    <location>
        <position position="725"/>
    </location>
    <ligand>
        <name>ATP</name>
        <dbReference type="ChEBI" id="CHEBI:30616"/>
    </ligand>
</feature>
<evidence type="ECO:0000255" key="1">
    <source>
        <dbReference type="HAMAP-Rule" id="MF_00049"/>
    </source>
</evidence>
<evidence type="ECO:0000305" key="2"/>